<organism>
    <name type="scientific">Dromaius novaehollandiae</name>
    <name type="common">Emu</name>
    <dbReference type="NCBI Taxonomy" id="8790"/>
    <lineage>
        <taxon>Eukaryota</taxon>
        <taxon>Metazoa</taxon>
        <taxon>Chordata</taxon>
        <taxon>Craniata</taxon>
        <taxon>Vertebrata</taxon>
        <taxon>Euteleostomi</taxon>
        <taxon>Archelosauria</taxon>
        <taxon>Archosauria</taxon>
        <taxon>Dinosauria</taxon>
        <taxon>Saurischia</taxon>
        <taxon>Theropoda</taxon>
        <taxon>Coelurosauria</taxon>
        <taxon>Aves</taxon>
        <taxon>Palaeognathae</taxon>
        <taxon>Casuariiformes</taxon>
        <taxon>Dromaiidae</taxon>
        <taxon>Dromaius</taxon>
    </lineage>
</organism>
<name>KRFT_DRONO</name>
<dbReference type="PIR" id="A02847">
    <property type="entry name" value="KREUB"/>
</dbReference>
<dbReference type="iPTMnet" id="P02449"/>
<dbReference type="Proteomes" id="UP000694423">
    <property type="component" value="Unplaced"/>
</dbReference>
<dbReference type="GO" id="GO:0005882">
    <property type="term" value="C:intermediate filament"/>
    <property type="evidence" value="ECO:0007669"/>
    <property type="project" value="UniProtKB-KW"/>
</dbReference>
<dbReference type="GO" id="GO:0005200">
    <property type="term" value="F:structural constituent of cytoskeleton"/>
    <property type="evidence" value="ECO:0007669"/>
    <property type="project" value="InterPro"/>
</dbReference>
<dbReference type="InterPro" id="IPR003461">
    <property type="entry name" value="Keratin"/>
</dbReference>
<dbReference type="PANTHER" id="PTHR31203">
    <property type="entry name" value="BETA-KERATIN-RELATED PROTEIN-RELATED"/>
    <property type="match status" value="1"/>
</dbReference>
<dbReference type="PANTHER" id="PTHR31203:SF1">
    <property type="entry name" value="BETA-KERATIN-RELATED PROTEIN-RELATED"/>
    <property type="match status" value="1"/>
</dbReference>
<dbReference type="Pfam" id="PF02422">
    <property type="entry name" value="Keratin"/>
    <property type="match status" value="1"/>
</dbReference>
<accession>P02449</accession>
<feature type="chain" id="PRO_0000097006" description="Feather keratin">
    <location>
        <begin position="1"/>
        <end position="102"/>
    </location>
</feature>
<feature type="modified residue" description="N-acetylserine" evidence="1">
    <location>
        <position position="1"/>
    </location>
</feature>
<keyword id="KW-0007">Acetylation</keyword>
<keyword id="KW-0903">Direct protein sequencing</keyword>
<keyword id="KW-0416">Keratin</keyword>
<evidence type="ECO:0000269" key="1">
    <source>
    </source>
</evidence>
<evidence type="ECO:0000305" key="2"/>
<protein>
    <recommendedName>
        <fullName>Feather keratin</fullName>
        <shortName>F-ker</shortName>
    </recommendedName>
</protein>
<reference key="1">
    <citation type="journal article" date="1973" name="Aust. J. Biol. Sci.">
        <title>The complete amino acid sequence of a feather keratin from emu (Dromaius novae-hollandiae).</title>
        <authorList>
            <person name="O'Donnell I.J."/>
        </authorList>
    </citation>
    <scope>PROTEIN SEQUENCE</scope>
    <scope>ACETYLATION AT SER-1</scope>
    <source>
        <tissue>Feather calamus</tissue>
        <tissue>Rachis</tissue>
    </source>
</reference>
<proteinExistence type="evidence at protein level"/>
<sequence length="102" mass="10293">SCYNPCLPRSSCGPTPLANSCNEPCLFRQCQDSTVVIEPSPVVVTLPGPILSSFPQNTVVGGSSTSAAVGSILSSQGVPISSGGFNLSGLSGRYSGARCLPC</sequence>
<comment type="subunit">
    <text>The avian keratins (F-ker, S-ker, C-ker and B-ker) are a complex mixture of very similar polypeptides.</text>
</comment>
<comment type="similarity">
    <text evidence="2">Belongs to the avian keratin family.</text>
</comment>